<evidence type="ECO:0000255" key="1">
    <source>
        <dbReference type="HAMAP-Rule" id="MF_01344"/>
    </source>
</evidence>
<evidence type="ECO:0000305" key="2"/>
<evidence type="ECO:0007829" key="3">
    <source>
        <dbReference type="PDB" id="1Q90"/>
    </source>
</evidence>
<dbReference type="EMBL" id="X56700">
    <property type="protein sequence ID" value="CAA40030.1"/>
    <property type="molecule type" value="Genomic_DNA"/>
</dbReference>
<dbReference type="EMBL" id="X72919">
    <property type="protein sequence ID" value="CAA51424.1"/>
    <property type="molecule type" value="Genomic_DNA"/>
</dbReference>
<dbReference type="EMBL" id="FJ423446">
    <property type="protein sequence ID" value="ACJ50092.1"/>
    <property type="molecule type" value="Genomic_DNA"/>
</dbReference>
<dbReference type="EMBL" id="L05506">
    <property type="protein sequence ID" value="AAA84153.1"/>
    <property type="molecule type" value="Genomic_DNA"/>
</dbReference>
<dbReference type="EMBL" id="BK000554">
    <property type="protein sequence ID" value="DAA00905.1"/>
    <property type="molecule type" value="Genomic_DNA"/>
</dbReference>
<dbReference type="PIR" id="S16918">
    <property type="entry name" value="S16918"/>
</dbReference>
<dbReference type="RefSeq" id="NP_958359.1">
    <property type="nucleotide sequence ID" value="NC_005353.1"/>
</dbReference>
<dbReference type="PDB" id="1Q90">
    <property type="method" value="X-ray"/>
    <property type="resolution" value="3.10 A"/>
    <property type="chains" value="D=1-159"/>
</dbReference>
<dbReference type="PDBsum" id="1Q90"/>
<dbReference type="SMR" id="P23230"/>
<dbReference type="FunCoup" id="P23230">
    <property type="interactions" value="218"/>
</dbReference>
<dbReference type="IntAct" id="P23230">
    <property type="interactions" value="1"/>
</dbReference>
<dbReference type="STRING" id="3055.P23230"/>
<dbReference type="PaxDb" id="3055-DAA00905"/>
<dbReference type="GeneID" id="2717021"/>
<dbReference type="KEGG" id="cre:ChreCp002"/>
<dbReference type="eggNOG" id="KOG4663">
    <property type="taxonomic scope" value="Eukaryota"/>
</dbReference>
<dbReference type="HOGENOM" id="CLU_112652_0_0_1"/>
<dbReference type="InParanoid" id="P23230"/>
<dbReference type="BioCyc" id="CHLAMY:CHRECP002-MONOMER"/>
<dbReference type="BioCyc" id="MetaCyc:CHRECP002-MONOMER"/>
<dbReference type="EvolutionaryTrace" id="P23230"/>
<dbReference type="Proteomes" id="UP000006906">
    <property type="component" value="Chloroplast"/>
</dbReference>
<dbReference type="GO" id="GO:0009535">
    <property type="term" value="C:chloroplast thylakoid membrane"/>
    <property type="evidence" value="ECO:0007669"/>
    <property type="project" value="UniProtKB-SubCell"/>
</dbReference>
<dbReference type="GO" id="GO:0045158">
    <property type="term" value="F:electron transporter, transferring electrons within cytochrome b6/f complex of photosystem II activity"/>
    <property type="evidence" value="ECO:0007669"/>
    <property type="project" value="UniProtKB-UniRule"/>
</dbReference>
<dbReference type="GO" id="GO:0045156">
    <property type="term" value="F:electron transporter, transferring electrons within the cyclic electron transport pathway of photosynthesis activity"/>
    <property type="evidence" value="ECO:0007669"/>
    <property type="project" value="InterPro"/>
</dbReference>
<dbReference type="GO" id="GO:0016491">
    <property type="term" value="F:oxidoreductase activity"/>
    <property type="evidence" value="ECO:0007669"/>
    <property type="project" value="InterPro"/>
</dbReference>
<dbReference type="GO" id="GO:0009767">
    <property type="term" value="P:photosynthetic electron transport chain"/>
    <property type="evidence" value="ECO:0007669"/>
    <property type="project" value="InterPro"/>
</dbReference>
<dbReference type="CDD" id="cd00290">
    <property type="entry name" value="cytochrome_b_C"/>
    <property type="match status" value="1"/>
</dbReference>
<dbReference type="FunFam" id="1.10.287.980:FF:000001">
    <property type="entry name" value="Cytochrome b6-f complex subunit 4"/>
    <property type="match status" value="1"/>
</dbReference>
<dbReference type="FunFam" id="1.20.5.510:FF:000002">
    <property type="entry name" value="Cytochrome b6-f complex subunit 4"/>
    <property type="match status" value="1"/>
</dbReference>
<dbReference type="Gene3D" id="1.10.287.980">
    <property type="entry name" value="plastocyanin oxidoreductase"/>
    <property type="match status" value="1"/>
</dbReference>
<dbReference type="Gene3D" id="1.20.5.510">
    <property type="entry name" value="Single helix bin"/>
    <property type="match status" value="1"/>
</dbReference>
<dbReference type="HAMAP" id="MF_01344">
    <property type="entry name" value="Cytb6_f_subIV"/>
    <property type="match status" value="1"/>
</dbReference>
<dbReference type="InterPro" id="IPR005798">
    <property type="entry name" value="Cyt_b/b6_C"/>
</dbReference>
<dbReference type="InterPro" id="IPR036150">
    <property type="entry name" value="Cyt_b/b6_C_sf"/>
</dbReference>
<dbReference type="InterPro" id="IPR005870">
    <property type="entry name" value="Cyt_b6/f_cplx_suIV"/>
</dbReference>
<dbReference type="InterPro" id="IPR048260">
    <property type="entry name" value="Cytochrome_b_C_euk/bac"/>
</dbReference>
<dbReference type="NCBIfam" id="TIGR01156">
    <property type="entry name" value="cytb6_f_IV"/>
    <property type="match status" value="1"/>
</dbReference>
<dbReference type="PANTHER" id="PTHR19271">
    <property type="entry name" value="CYTOCHROME B"/>
    <property type="match status" value="1"/>
</dbReference>
<dbReference type="PANTHER" id="PTHR19271:SF41">
    <property type="entry name" value="CYTOCHROME B_B6 C-TERMINAL REGION PROFILE DOMAIN-CONTAINING PROTEIN"/>
    <property type="match status" value="1"/>
</dbReference>
<dbReference type="Pfam" id="PF00032">
    <property type="entry name" value="Cytochrom_B_C"/>
    <property type="match status" value="1"/>
</dbReference>
<dbReference type="PIRSF" id="PIRSF000033">
    <property type="entry name" value="B6f_17K"/>
    <property type="match status" value="1"/>
</dbReference>
<dbReference type="SUPFAM" id="SSF81648">
    <property type="entry name" value="a domain/subunit of cytochrome bc1 complex (Ubiquinol-cytochrome c reductase)"/>
    <property type="match status" value="1"/>
</dbReference>
<dbReference type="PROSITE" id="PS51003">
    <property type="entry name" value="CYTB_CTER"/>
    <property type="match status" value="1"/>
</dbReference>
<gene>
    <name evidence="1" type="primary">petD</name>
</gene>
<geneLocation type="chloroplast"/>
<comment type="function">
    <text>Component of the cytochrome b6-f complex, which mediates electron transfer between photosystem II (PSII) and photosystem I (PSI), cyclic electron flow around PSI, and state transitions.</text>
</comment>
<comment type="subunit">
    <text>The 4 large subunits of the cytochrome b6-f complex are cytochrome b6, subunit IV (17 kDa polypeptide, petD), cytochrome f and the Rieske protein, while the 4 small subunits are petG, petL, petM and petN. The complex functions as a dimer.</text>
</comment>
<comment type="subcellular location">
    <subcellularLocation>
        <location>Plastid</location>
        <location>Chloroplast thylakoid membrane</location>
        <topology>Multi-pass membrane protein</topology>
    </subcellularLocation>
</comment>
<comment type="PTM">
    <text>The N-terminus is blocked.</text>
</comment>
<comment type="similarity">
    <text evidence="1">Belongs to the cytochrome b family. PetD subfamily.</text>
</comment>
<proteinExistence type="evidence at protein level"/>
<keyword id="KW-0002">3D-structure</keyword>
<keyword id="KW-0150">Chloroplast</keyword>
<keyword id="KW-0249">Electron transport</keyword>
<keyword id="KW-0472">Membrane</keyword>
<keyword id="KW-0602">Photosynthesis</keyword>
<keyword id="KW-0934">Plastid</keyword>
<keyword id="KW-1185">Reference proteome</keyword>
<keyword id="KW-0793">Thylakoid</keyword>
<keyword id="KW-0812">Transmembrane</keyword>
<keyword id="KW-1133">Transmembrane helix</keyword>
<keyword id="KW-0813">Transport</keyword>
<feature type="chain" id="PRO_0000061852" description="Cytochrome b6-f complex subunit 4">
    <location>
        <begin position="1"/>
        <end position="160"/>
    </location>
</feature>
<feature type="transmembrane region" description="Helical" evidence="1">
    <location>
        <begin position="36"/>
        <end position="56"/>
    </location>
</feature>
<feature type="transmembrane region" description="Helical" evidence="1">
    <location>
        <begin position="95"/>
        <end position="115"/>
    </location>
</feature>
<feature type="transmembrane region" description="Helical" evidence="1">
    <location>
        <begin position="131"/>
        <end position="151"/>
    </location>
</feature>
<feature type="sequence conflict" description="In Ref. 2." evidence="2" ref="2">
    <original>N</original>
    <variation>F</variation>
    <location>
        <position position="67"/>
    </location>
</feature>
<feature type="helix" evidence="3">
    <location>
        <begin position="12"/>
        <end position="20"/>
    </location>
</feature>
<feature type="helix" evidence="3">
    <location>
        <begin position="24"/>
        <end position="26"/>
    </location>
</feature>
<feature type="strand" evidence="3">
    <location>
        <begin position="27"/>
        <end position="30"/>
    </location>
</feature>
<feature type="helix" evidence="3">
    <location>
        <begin position="34"/>
        <end position="38"/>
    </location>
</feature>
<feature type="helix" evidence="3">
    <location>
        <begin position="39"/>
        <end position="57"/>
    </location>
</feature>
<feature type="helix" evidence="3">
    <location>
        <begin position="79"/>
        <end position="81"/>
    </location>
</feature>
<feature type="helix" evidence="3">
    <location>
        <begin position="82"/>
        <end position="90"/>
    </location>
</feature>
<feature type="helix" evidence="3">
    <location>
        <begin position="94"/>
        <end position="108"/>
    </location>
</feature>
<feature type="turn" evidence="3">
    <location>
        <begin position="109"/>
        <end position="115"/>
    </location>
</feature>
<feature type="helix" evidence="3">
    <location>
        <begin position="123"/>
        <end position="125"/>
    </location>
</feature>
<feature type="helix" evidence="3">
    <location>
        <begin position="127"/>
        <end position="146"/>
    </location>
</feature>
<feature type="helix" evidence="3">
    <location>
        <begin position="151"/>
        <end position="154"/>
    </location>
</feature>
<sequence length="160" mass="17442">MSVTKKPDLSDPVLKAKLAKGMGHNTYGEPAWPNDLLYMFPVVILGTFACVIGLSVLDPAAMGEPANPFATPLEILPEWYFYPVFQILRVVPNKLLGVLLMAAVPAGLITVPFIESINKFQNPYRRPIATILFLLGTLVAVWLGIGSTFPIDISLTLGLF</sequence>
<accession>P23230</accession>
<accession>B7U1E5</accession>
<organism>
    <name type="scientific">Chlamydomonas reinhardtii</name>
    <name type="common">Chlamydomonas smithii</name>
    <dbReference type="NCBI Taxonomy" id="3055"/>
    <lineage>
        <taxon>Eukaryota</taxon>
        <taxon>Viridiplantae</taxon>
        <taxon>Chlorophyta</taxon>
        <taxon>core chlorophytes</taxon>
        <taxon>Chlorophyceae</taxon>
        <taxon>CS clade</taxon>
        <taxon>Chlamydomonadales</taxon>
        <taxon>Chlamydomonadaceae</taxon>
        <taxon>Chlamydomonas</taxon>
    </lineage>
</organism>
<name>PETD_CHLRE</name>
<protein>
    <recommendedName>
        <fullName evidence="1">Cytochrome b6-f complex subunit 4</fullName>
    </recommendedName>
    <alternativeName>
        <fullName evidence="1">17 kDa polypeptide</fullName>
    </alternativeName>
</protein>
<reference key="1">
    <citation type="journal article" date="1991" name="Nucleic Acids Res.">
        <title>Sequences of trnR-ACG and petD that contain a tRNA-like element within the chloroplast genome of Chlamydomonas reinhardtii.</title>
        <authorList>
            <person name="Yu W."/>
            <person name="Spreitzer R.J."/>
        </authorList>
    </citation>
    <scope>NUCLEOTIDE SEQUENCE [GENOMIC DNA]</scope>
    <source>
        <strain>2137</strain>
    </source>
</reference>
<reference key="2">
    <citation type="journal article" date="1991" name="FEBS Lett.">
        <title>Nucleotide sequences of the continuous and separated petA, petB and petD chloroplast genes in Chlamydomonas reinhardtii.</title>
        <authorList>
            <person name="Bueschlen S."/>
            <person name="Choquet Y."/>
            <person name="Kuras R."/>
            <person name="Wollman F.A."/>
        </authorList>
    </citation>
    <scope>NUCLEOTIDE SEQUENCE [GENOMIC DNA]</scope>
    <source>
        <strain>137c / CC-125</strain>
    </source>
</reference>
<reference key="3">
    <citation type="journal article" date="2009" name="BMC Evol. Biol.">
        <title>Nucleotide diversity of the Chlamydomonas reinhardtii plastid genome: addressing the mutational-hazard hypothesis.</title>
        <authorList>
            <person name="Smith D.R."/>
            <person name="Lee R.W."/>
        </authorList>
    </citation>
    <scope>NUCLEOTIDE SEQUENCE [LARGE SCALE GENOMIC DNA]</scope>
    <source>
        <strain>CC-503</strain>
    </source>
</reference>
<reference key="4">
    <citation type="journal article" date="1993" name="Proc. Natl. Acad. Sci. U.S.A.">
        <title>In vivo analysis of Chlamydomonas chloroplast petD gene expression using stable transformation of beta-glucuronidase translational fusions.</title>
        <authorList>
            <person name="Sakamoto W."/>
            <person name="Kindle K.L."/>
            <person name="Stern D.B."/>
        </authorList>
    </citation>
    <scope>NUCLEOTIDE SEQUENCE [GENOMIC DNA] OF 1-8</scope>
    <source>
        <strain>CC-400</strain>
    </source>
</reference>
<reference key="5">
    <citation type="journal article" date="2002" name="Plant Cell">
        <title>The Chlamydomonas reinhardtii plastid chromosome: islands of genes in a sea of repeats.</title>
        <authorList>
            <person name="Maul J.E."/>
            <person name="Lilly J.W."/>
            <person name="Cui L."/>
            <person name="dePamphilis C.W."/>
            <person name="Miller W."/>
            <person name="Harris E.H."/>
            <person name="Stern D.B."/>
        </authorList>
    </citation>
    <scope>IDENTIFICATION</scope>
    <scope>COMPLETE PLASTID GENOME</scope>
</reference>
<reference key="6">
    <citation type="journal article" date="1995" name="J. Biol. Chem.">
        <title>Purification and characterization of the cytochrome b6 f complex from Chlamydomonas reinhardtii.</title>
        <authorList>
            <person name="Pierre Y."/>
            <person name="Breyton C."/>
            <person name="Kramer D."/>
            <person name="Popot J.-L."/>
        </authorList>
    </citation>
    <scope>CHARACTERIZATION</scope>
    <source>
        <strain>WT12</strain>
    </source>
</reference>
<reference key="7">
    <citation type="journal article" date="2003" name="Nature">
        <title>An atypical haem in the cytochrome b(6)f complex.</title>
        <authorList>
            <person name="Stroebel D."/>
            <person name="Choquet Y."/>
            <person name="Popot J.-L."/>
            <person name="Picot D."/>
        </authorList>
    </citation>
    <scope>X-RAY CRYSTALLOGRAPHY (3.1 ANGSTROMS) OF 1-159</scope>
</reference>